<organism>
    <name type="scientific">Escherichia coli O157:H7</name>
    <dbReference type="NCBI Taxonomy" id="83334"/>
    <lineage>
        <taxon>Bacteria</taxon>
        <taxon>Pseudomonadati</taxon>
        <taxon>Pseudomonadota</taxon>
        <taxon>Gammaproteobacteria</taxon>
        <taxon>Enterobacterales</taxon>
        <taxon>Enterobacteriaceae</taxon>
        <taxon>Escherichia</taxon>
    </lineage>
</organism>
<gene>
    <name type="primary">fruK</name>
    <name type="ordered locus">Z3426</name>
    <name type="ordered locus">ECs3060</name>
</gene>
<accession>P0AEX1</accession>
<accession>P23539</accession>
<proteinExistence type="inferred from homology"/>
<keyword id="KW-0067">ATP-binding</keyword>
<keyword id="KW-0418">Kinase</keyword>
<keyword id="KW-0547">Nucleotide-binding</keyword>
<keyword id="KW-1185">Reference proteome</keyword>
<keyword id="KW-0808">Transferase</keyword>
<comment type="function">
    <text evidence="2">Catalyzes the ATP-dependent phosphorylation of fructose-l-phosphate to fructose-l,6-bisphosphate.</text>
</comment>
<comment type="catalytic activity">
    <reaction evidence="2">
        <text>beta-D-fructose 1-phosphate + ATP = beta-D-fructose 1,6-bisphosphate + ADP + H(+)</text>
        <dbReference type="Rhea" id="RHEA:14213"/>
        <dbReference type="ChEBI" id="CHEBI:15378"/>
        <dbReference type="ChEBI" id="CHEBI:30616"/>
        <dbReference type="ChEBI" id="CHEBI:32966"/>
        <dbReference type="ChEBI" id="CHEBI:138881"/>
        <dbReference type="ChEBI" id="CHEBI:456216"/>
        <dbReference type="EC" id="2.7.1.56"/>
    </reaction>
</comment>
<comment type="similarity">
    <text evidence="3">Belongs to the carbohydrate kinase PfkB family.</text>
</comment>
<protein>
    <recommendedName>
        <fullName evidence="2">1-phosphofructokinase</fullName>
        <ecNumber evidence="2">2.7.1.56</ecNumber>
    </recommendedName>
    <alternativeName>
        <fullName evidence="2">Fructose 1-phosphate kinase</fullName>
        <shortName evidence="2">Fru1PK</shortName>
    </alternativeName>
</protein>
<dbReference type="EC" id="2.7.1.56" evidence="2"/>
<dbReference type="EMBL" id="AE005174">
    <property type="protein sequence ID" value="AAG57306.1"/>
    <property type="molecule type" value="Genomic_DNA"/>
</dbReference>
<dbReference type="EMBL" id="BA000007">
    <property type="protein sequence ID" value="BAB36483.1"/>
    <property type="molecule type" value="Genomic_DNA"/>
</dbReference>
<dbReference type="PIR" id="D91011">
    <property type="entry name" value="D91011"/>
</dbReference>
<dbReference type="PIR" id="F85855">
    <property type="entry name" value="F85855"/>
</dbReference>
<dbReference type="RefSeq" id="NP_311087.1">
    <property type="nucleotide sequence ID" value="NC_002695.1"/>
</dbReference>
<dbReference type="RefSeq" id="WP_000091263.1">
    <property type="nucleotide sequence ID" value="NZ_VOAI01000001.1"/>
</dbReference>
<dbReference type="SMR" id="P0AEX1"/>
<dbReference type="STRING" id="155864.Z3426"/>
<dbReference type="GeneID" id="75206421"/>
<dbReference type="GeneID" id="916764"/>
<dbReference type="KEGG" id="ece:Z3426"/>
<dbReference type="KEGG" id="ecs:ECs_3060"/>
<dbReference type="PATRIC" id="fig|386585.9.peg.3189"/>
<dbReference type="eggNOG" id="COG1105">
    <property type="taxonomic scope" value="Bacteria"/>
</dbReference>
<dbReference type="HOGENOM" id="CLU_050013_0_1_6"/>
<dbReference type="OMA" id="KPYMIKP"/>
<dbReference type="Proteomes" id="UP000000558">
    <property type="component" value="Chromosome"/>
</dbReference>
<dbReference type="Proteomes" id="UP000002519">
    <property type="component" value="Chromosome"/>
</dbReference>
<dbReference type="GO" id="GO:0005829">
    <property type="term" value="C:cytosol"/>
    <property type="evidence" value="ECO:0007669"/>
    <property type="project" value="TreeGrafter"/>
</dbReference>
<dbReference type="GO" id="GO:0008662">
    <property type="term" value="F:1-phosphofructokinase activity"/>
    <property type="evidence" value="ECO:0007669"/>
    <property type="project" value="UniProtKB-EC"/>
</dbReference>
<dbReference type="GO" id="GO:0005524">
    <property type="term" value="F:ATP binding"/>
    <property type="evidence" value="ECO:0007669"/>
    <property type="project" value="UniProtKB-KW"/>
</dbReference>
<dbReference type="CDD" id="cd01164">
    <property type="entry name" value="FruK_PfkB_like"/>
    <property type="match status" value="1"/>
</dbReference>
<dbReference type="FunFam" id="3.40.1190.20:FF:000001">
    <property type="entry name" value="Phosphofructokinase"/>
    <property type="match status" value="1"/>
</dbReference>
<dbReference type="Gene3D" id="3.40.1190.20">
    <property type="match status" value="1"/>
</dbReference>
<dbReference type="InterPro" id="IPR022463">
    <property type="entry name" value="1-PFruKinase"/>
</dbReference>
<dbReference type="InterPro" id="IPR002173">
    <property type="entry name" value="Carboh/pur_kinase_PfkB_CS"/>
</dbReference>
<dbReference type="InterPro" id="IPR011611">
    <property type="entry name" value="PfkB_dom"/>
</dbReference>
<dbReference type="InterPro" id="IPR029056">
    <property type="entry name" value="Ribokinase-like"/>
</dbReference>
<dbReference type="InterPro" id="IPR017583">
    <property type="entry name" value="Tagatose/fructose_Pkinase"/>
</dbReference>
<dbReference type="NCBIfam" id="TIGR03168">
    <property type="entry name" value="1-PFK"/>
    <property type="match status" value="1"/>
</dbReference>
<dbReference type="NCBIfam" id="TIGR03828">
    <property type="entry name" value="pfkB"/>
    <property type="match status" value="1"/>
</dbReference>
<dbReference type="NCBIfam" id="NF007068">
    <property type="entry name" value="PRK09513.1"/>
    <property type="match status" value="1"/>
</dbReference>
<dbReference type="PANTHER" id="PTHR46566:SF5">
    <property type="entry name" value="1-PHOSPHOFRUCTOKINASE"/>
    <property type="match status" value="1"/>
</dbReference>
<dbReference type="PANTHER" id="PTHR46566">
    <property type="entry name" value="1-PHOSPHOFRUCTOKINASE-RELATED"/>
    <property type="match status" value="1"/>
</dbReference>
<dbReference type="Pfam" id="PF00294">
    <property type="entry name" value="PfkB"/>
    <property type="match status" value="1"/>
</dbReference>
<dbReference type="PIRSF" id="PIRSF000535">
    <property type="entry name" value="1PFK/6PFK/LacC"/>
    <property type="match status" value="1"/>
</dbReference>
<dbReference type="SUPFAM" id="SSF53613">
    <property type="entry name" value="Ribokinase-like"/>
    <property type="match status" value="1"/>
</dbReference>
<dbReference type="PROSITE" id="PS00583">
    <property type="entry name" value="PFKB_KINASES_1"/>
    <property type="match status" value="1"/>
</dbReference>
<dbReference type="PROSITE" id="PS00584">
    <property type="entry name" value="PFKB_KINASES_2"/>
    <property type="match status" value="1"/>
</dbReference>
<reference key="1">
    <citation type="journal article" date="2001" name="Nature">
        <title>Genome sequence of enterohaemorrhagic Escherichia coli O157:H7.</title>
        <authorList>
            <person name="Perna N.T."/>
            <person name="Plunkett G. III"/>
            <person name="Burland V."/>
            <person name="Mau B."/>
            <person name="Glasner J.D."/>
            <person name="Rose D.J."/>
            <person name="Mayhew G.F."/>
            <person name="Evans P.S."/>
            <person name="Gregor J."/>
            <person name="Kirkpatrick H.A."/>
            <person name="Posfai G."/>
            <person name="Hackett J."/>
            <person name="Klink S."/>
            <person name="Boutin A."/>
            <person name="Shao Y."/>
            <person name="Miller L."/>
            <person name="Grotbeck E.J."/>
            <person name="Davis N.W."/>
            <person name="Lim A."/>
            <person name="Dimalanta E.T."/>
            <person name="Potamousis K."/>
            <person name="Apodaca J."/>
            <person name="Anantharaman T.S."/>
            <person name="Lin J."/>
            <person name="Yen G."/>
            <person name="Schwartz D.C."/>
            <person name="Welch R.A."/>
            <person name="Blattner F.R."/>
        </authorList>
    </citation>
    <scope>NUCLEOTIDE SEQUENCE [LARGE SCALE GENOMIC DNA]</scope>
    <source>
        <strain>O157:H7 / EDL933 / ATCC 700927 / EHEC</strain>
    </source>
</reference>
<reference key="2">
    <citation type="journal article" date="2001" name="DNA Res.">
        <title>Complete genome sequence of enterohemorrhagic Escherichia coli O157:H7 and genomic comparison with a laboratory strain K-12.</title>
        <authorList>
            <person name="Hayashi T."/>
            <person name="Makino K."/>
            <person name="Ohnishi M."/>
            <person name="Kurokawa K."/>
            <person name="Ishii K."/>
            <person name="Yokoyama K."/>
            <person name="Han C.-G."/>
            <person name="Ohtsubo E."/>
            <person name="Nakayama K."/>
            <person name="Murata T."/>
            <person name="Tanaka M."/>
            <person name="Tobe T."/>
            <person name="Iida T."/>
            <person name="Takami H."/>
            <person name="Honda T."/>
            <person name="Sasakawa C."/>
            <person name="Ogasawara N."/>
            <person name="Yasunaga T."/>
            <person name="Kuhara S."/>
            <person name="Shiba T."/>
            <person name="Hattori M."/>
            <person name="Shinagawa H."/>
        </authorList>
    </citation>
    <scope>NUCLEOTIDE SEQUENCE [LARGE SCALE GENOMIC DNA]</scope>
    <source>
        <strain>O157:H7 / Sakai / RIMD 0509952 / EHEC</strain>
    </source>
</reference>
<name>K1PF_ECO57</name>
<sequence length="312" mass="33756">MSRRVATITLNPAYDLVGFCPEIERGEVNLVKTTGLHAAGKGINVAKVLKDLGIDVTVGGFLGKDNQDGFQQLFSELGIANRFQVVQGRTRINVKLTEKDGEVTDFNFSGFEVTPADWERFVTDSLSWLGQFDMVCVSGSLPSGVSPEAFTDWMTRLRSQCPCIIFDSSREALVAGLKAAPWLVKPNRRELEIWAGRKLPEMKDVIEAAHALREQGIAHVVISLGAEGALWVNASGEWIAKPPSVDVVSTVGAGDSMVGGLIYGLLMRESSEHTLRLATAVAALAVSQSNVGITDRPQLAAMMARVDLQPFN</sequence>
<evidence type="ECO:0000250" key="1">
    <source>
        <dbReference type="UniProtKB" id="P0A9J6"/>
    </source>
</evidence>
<evidence type="ECO:0000250" key="2">
    <source>
        <dbReference type="UniProtKB" id="P0AEW9"/>
    </source>
</evidence>
<evidence type="ECO:0000305" key="3"/>
<feature type="chain" id="PRO_0000080077" description="1-phosphofructokinase">
    <location>
        <begin position="1"/>
        <end position="312"/>
    </location>
</feature>
<feature type="active site" description="Proton acceptor" evidence="1">
    <location>
        <position position="255"/>
    </location>
</feature>
<feature type="binding site" evidence="1">
    <location>
        <begin position="223"/>
        <end position="228"/>
    </location>
    <ligand>
        <name>ATP</name>
        <dbReference type="ChEBI" id="CHEBI:30616"/>
    </ligand>
</feature>
<feature type="binding site" evidence="1">
    <location>
        <begin position="254"/>
        <end position="255"/>
    </location>
    <ligand>
        <name>ATP</name>
        <dbReference type="ChEBI" id="CHEBI:30616"/>
    </ligand>
</feature>